<evidence type="ECO:0000255" key="1">
    <source>
        <dbReference type="HAMAP-Rule" id="MF_01570"/>
    </source>
</evidence>
<organism>
    <name type="scientific">Wolbachia pipientis wMel</name>
    <dbReference type="NCBI Taxonomy" id="163164"/>
    <lineage>
        <taxon>Bacteria</taxon>
        <taxon>Pseudomonadati</taxon>
        <taxon>Pseudomonadota</taxon>
        <taxon>Alphaproteobacteria</taxon>
        <taxon>Rickettsiales</taxon>
        <taxon>Anaplasmataceae</taxon>
        <taxon>Wolbachieae</taxon>
        <taxon>Wolbachia</taxon>
    </lineage>
</organism>
<feature type="chain" id="PRO_0000248921" description="Proline--tRNA ligase">
    <location>
        <begin position="1"/>
        <end position="422"/>
    </location>
</feature>
<accession>Q73GW6</accession>
<proteinExistence type="inferred from homology"/>
<name>SYP_WOLPM</name>
<keyword id="KW-0030">Aminoacyl-tRNA synthetase</keyword>
<keyword id="KW-0067">ATP-binding</keyword>
<keyword id="KW-0963">Cytoplasm</keyword>
<keyword id="KW-0436">Ligase</keyword>
<keyword id="KW-0547">Nucleotide-binding</keyword>
<keyword id="KW-0648">Protein biosynthesis</keyword>
<protein>
    <recommendedName>
        <fullName evidence="1">Proline--tRNA ligase</fullName>
        <ecNumber evidence="1">6.1.1.15</ecNumber>
    </recommendedName>
    <alternativeName>
        <fullName evidence="1">Prolyl-tRNA synthetase</fullName>
        <shortName evidence="1">ProRS</shortName>
    </alternativeName>
</protein>
<gene>
    <name evidence="1" type="primary">proS</name>
    <name type="ordered locus">WD_0813</name>
</gene>
<dbReference type="EC" id="6.1.1.15" evidence="1"/>
<dbReference type="EMBL" id="AE017196">
    <property type="protein sequence ID" value="AAS14500.1"/>
    <property type="molecule type" value="Genomic_DNA"/>
</dbReference>
<dbReference type="RefSeq" id="WP_010962850.1">
    <property type="nucleotide sequence ID" value="NZ_JAIUXN010000060.1"/>
</dbReference>
<dbReference type="SMR" id="Q73GW6"/>
<dbReference type="EnsemblBacteria" id="AAS14500">
    <property type="protein sequence ID" value="AAS14500"/>
    <property type="gene ID" value="WD_0813"/>
</dbReference>
<dbReference type="GeneID" id="70036288"/>
<dbReference type="KEGG" id="wol:WD_0813"/>
<dbReference type="eggNOG" id="COG0442">
    <property type="taxonomic scope" value="Bacteria"/>
</dbReference>
<dbReference type="Proteomes" id="UP000008215">
    <property type="component" value="Chromosome"/>
</dbReference>
<dbReference type="GO" id="GO:0005829">
    <property type="term" value="C:cytosol"/>
    <property type="evidence" value="ECO:0007669"/>
    <property type="project" value="TreeGrafter"/>
</dbReference>
<dbReference type="GO" id="GO:0005524">
    <property type="term" value="F:ATP binding"/>
    <property type="evidence" value="ECO:0007669"/>
    <property type="project" value="UniProtKB-UniRule"/>
</dbReference>
<dbReference type="GO" id="GO:0004827">
    <property type="term" value="F:proline-tRNA ligase activity"/>
    <property type="evidence" value="ECO:0007669"/>
    <property type="project" value="UniProtKB-UniRule"/>
</dbReference>
<dbReference type="GO" id="GO:0006433">
    <property type="term" value="P:prolyl-tRNA aminoacylation"/>
    <property type="evidence" value="ECO:0007669"/>
    <property type="project" value="UniProtKB-UniRule"/>
</dbReference>
<dbReference type="CDD" id="cd00861">
    <property type="entry name" value="ProRS_anticodon_short"/>
    <property type="match status" value="1"/>
</dbReference>
<dbReference type="CDD" id="cd00779">
    <property type="entry name" value="ProRS_core_prok"/>
    <property type="match status" value="1"/>
</dbReference>
<dbReference type="FunFam" id="3.30.930.10:FF:000042">
    <property type="entry name" value="probable proline--tRNA ligase, mitochondrial"/>
    <property type="match status" value="1"/>
</dbReference>
<dbReference type="FunFam" id="3.40.50.800:FF:000032">
    <property type="entry name" value="Proline--tRNA ligase"/>
    <property type="match status" value="1"/>
</dbReference>
<dbReference type="Gene3D" id="3.40.50.800">
    <property type="entry name" value="Anticodon-binding domain"/>
    <property type="match status" value="1"/>
</dbReference>
<dbReference type="Gene3D" id="3.30.930.10">
    <property type="entry name" value="Bira Bifunctional Protein, Domain 2"/>
    <property type="match status" value="1"/>
</dbReference>
<dbReference type="HAMAP" id="MF_01570">
    <property type="entry name" value="Pro_tRNA_synth_type2"/>
    <property type="match status" value="1"/>
</dbReference>
<dbReference type="InterPro" id="IPR002314">
    <property type="entry name" value="aa-tRNA-synt_IIb"/>
</dbReference>
<dbReference type="InterPro" id="IPR006195">
    <property type="entry name" value="aa-tRNA-synth_II"/>
</dbReference>
<dbReference type="InterPro" id="IPR045864">
    <property type="entry name" value="aa-tRNA-synth_II/BPL/LPL"/>
</dbReference>
<dbReference type="InterPro" id="IPR004154">
    <property type="entry name" value="Anticodon-bd"/>
</dbReference>
<dbReference type="InterPro" id="IPR036621">
    <property type="entry name" value="Anticodon-bd_dom_sf"/>
</dbReference>
<dbReference type="InterPro" id="IPR002316">
    <property type="entry name" value="Pro-tRNA-ligase_IIa"/>
</dbReference>
<dbReference type="InterPro" id="IPR004500">
    <property type="entry name" value="Pro-tRNA-synth_IIa_bac-type"/>
</dbReference>
<dbReference type="InterPro" id="IPR050062">
    <property type="entry name" value="Pro-tRNA_synthetase"/>
</dbReference>
<dbReference type="InterPro" id="IPR023716">
    <property type="entry name" value="Prolyl-tRNA_ligase_IIa_type2"/>
</dbReference>
<dbReference type="InterPro" id="IPR044140">
    <property type="entry name" value="ProRS_anticodon_short"/>
</dbReference>
<dbReference type="InterPro" id="IPR033730">
    <property type="entry name" value="ProRS_core_prok"/>
</dbReference>
<dbReference type="NCBIfam" id="NF008979">
    <property type="entry name" value="PRK12325.1"/>
    <property type="match status" value="1"/>
</dbReference>
<dbReference type="NCBIfam" id="TIGR00409">
    <property type="entry name" value="proS_fam_II"/>
    <property type="match status" value="1"/>
</dbReference>
<dbReference type="PANTHER" id="PTHR42753">
    <property type="entry name" value="MITOCHONDRIAL RIBOSOME PROTEIN L39/PROLYL-TRNA LIGASE FAMILY MEMBER"/>
    <property type="match status" value="1"/>
</dbReference>
<dbReference type="PANTHER" id="PTHR42753:SF2">
    <property type="entry name" value="PROLINE--TRNA LIGASE"/>
    <property type="match status" value="1"/>
</dbReference>
<dbReference type="Pfam" id="PF03129">
    <property type="entry name" value="HGTP_anticodon"/>
    <property type="match status" value="1"/>
</dbReference>
<dbReference type="Pfam" id="PF00587">
    <property type="entry name" value="tRNA-synt_2b"/>
    <property type="match status" value="1"/>
</dbReference>
<dbReference type="PRINTS" id="PR01046">
    <property type="entry name" value="TRNASYNTHPRO"/>
</dbReference>
<dbReference type="SUPFAM" id="SSF52954">
    <property type="entry name" value="Class II aaRS ABD-related"/>
    <property type="match status" value="1"/>
</dbReference>
<dbReference type="SUPFAM" id="SSF55681">
    <property type="entry name" value="Class II aaRS and biotin synthetases"/>
    <property type="match status" value="1"/>
</dbReference>
<dbReference type="PROSITE" id="PS50862">
    <property type="entry name" value="AA_TRNA_LIGASE_II"/>
    <property type="match status" value="1"/>
</dbReference>
<comment type="function">
    <text evidence="1">Catalyzes the attachment of proline to tRNA(Pro) in a two-step reaction: proline is first activated by ATP to form Pro-AMP and then transferred to the acceptor end of tRNA(Pro).</text>
</comment>
<comment type="catalytic activity">
    <reaction evidence="1">
        <text>tRNA(Pro) + L-proline + ATP = L-prolyl-tRNA(Pro) + AMP + diphosphate</text>
        <dbReference type="Rhea" id="RHEA:14305"/>
        <dbReference type="Rhea" id="RHEA-COMP:9700"/>
        <dbReference type="Rhea" id="RHEA-COMP:9702"/>
        <dbReference type="ChEBI" id="CHEBI:30616"/>
        <dbReference type="ChEBI" id="CHEBI:33019"/>
        <dbReference type="ChEBI" id="CHEBI:60039"/>
        <dbReference type="ChEBI" id="CHEBI:78442"/>
        <dbReference type="ChEBI" id="CHEBI:78532"/>
        <dbReference type="ChEBI" id="CHEBI:456215"/>
        <dbReference type="EC" id="6.1.1.15"/>
    </reaction>
</comment>
<comment type="subunit">
    <text evidence="1">Homodimer.</text>
</comment>
<comment type="subcellular location">
    <subcellularLocation>
        <location evidence="1">Cytoplasm</location>
    </subcellularLocation>
</comment>
<comment type="similarity">
    <text evidence="1">Belongs to the class-II aminoacyl-tRNA synthetase family. ProS type 2 subfamily.</text>
</comment>
<sequence length="422" mass="47907">MRLSKYYLPTLKEKPAHAKIISHQYSLRAGLIKQIASGIYTWLPLGLLVLKNIEDIIRDEMNKSGAIEALMPCVQPASLWRESGRYDDYGKEMLRIKDRHEEDMLFGPTHEEIATDLIRDVVKSYKDLPLCLYQIQWKFRDEVRPRYGVMRGREFLMKDAYSFDVDYEGALNSYNLMYKTYIKIFKRMGFTPIGVGADTGPIGGNLSHEFHILANTGESTLYYDNKFSELLESEDIESLKSIYAVADDMHDPETCPISQEQLNVSKGIEIGHIFYFGDKYSKPMKASVTSQDGKNVNIHMGSYGIGVSRLVGAIIEAFHDDKGIIWPEEVAPFRIGLINLQTKVTEAADKIYKALKSDEVLYDDTEGSVGVKFSRMDLIGLPWQIIVGKKAVSENIVEVKNRATGEVKEMQIEEAINHFSAK</sequence>
<reference key="1">
    <citation type="journal article" date="2004" name="PLoS Biol.">
        <title>Phylogenomics of the reproductive parasite Wolbachia pipientis wMel: a streamlined genome overrun by mobile genetic elements.</title>
        <authorList>
            <person name="Wu M."/>
            <person name="Sun L.V."/>
            <person name="Vamathevan J.J."/>
            <person name="Riegler M."/>
            <person name="DeBoy R.T."/>
            <person name="Brownlie J.C."/>
            <person name="McGraw E.A."/>
            <person name="Martin W."/>
            <person name="Esser C."/>
            <person name="Ahmadinejad N."/>
            <person name="Wiegand C."/>
            <person name="Madupu R."/>
            <person name="Beanan M.J."/>
            <person name="Brinkac L.M."/>
            <person name="Daugherty S.C."/>
            <person name="Durkin A.S."/>
            <person name="Kolonay J.F."/>
            <person name="Nelson W.C."/>
            <person name="Mohamoud Y."/>
            <person name="Lee P."/>
            <person name="Berry K.J."/>
            <person name="Young M.B."/>
            <person name="Utterback T.R."/>
            <person name="Weidman J.F."/>
            <person name="Nierman W.C."/>
            <person name="Paulsen I.T."/>
            <person name="Nelson K.E."/>
            <person name="Tettelin H."/>
            <person name="O'Neill S.L."/>
            <person name="Eisen J.A."/>
        </authorList>
    </citation>
    <scope>NUCLEOTIDE SEQUENCE [LARGE SCALE GENOMIC DNA]</scope>
</reference>